<proteinExistence type="evidence at protein level"/>
<gene>
    <name evidence="6" type="primary">apf1</name>
    <name type="ORF">FFUJ_00003</name>
</gene>
<comment type="function">
    <text evidence="4 5">Non-ribosomal peptide synthetase; part of the gene cluster that mediates the biosynthesis of the cyclic tetrapeptide apicidin F (APF) (PubMed:25058475). The non-ribosomal peptide synthetase apf1 incorporates four different amino acids to produce apicidin F: L-phenylalanine, D-pipecolic acid (D-pip), N-methoxy-L-tryptophan and L-2-aminooctanedioic acid (PubMed:25058475). L-Phenylalanine is the only proteinogenic amino acid directly used by apf1 (PubMed:24195442, PubMed:25058475). The 3 other apf1 substrates are non-proteinogenic and have to be modified by other enzymes of the cluster (PubMed:25058475). Lysine is converted to delta-1-pyrroline-5-carboxylate (P5C) which is reduced to L-pipecolic acid (L-pip) by apf3 (PubMed:25058475). L-pip is epimerized to D-pip, probably by apf1 activity, prior to incorporation (PubMed:25058475). L-Tryptophan is N-oxidyzed by one of the cytochrome P450 monooxygenases (apf7 or apf8), and further methylated at the hydroxy group by the O-methyltransferase apf6 to yield N-methoxy-L-tryptophan (PubMed:25058475). The synthesis of the fourth apf1 substrate is more complex (PubMed:25058475). The fatty acid synthase apf5 is involved in the synthesis of the octanoic acid backbone of L-2-aminooctanedioic acid by fixing one acetyl-CoA unit and three malonyl-CoA units (PubMed:25058475). Then one of the cytochrome P450 monooxygenases (apf7 or apf8) may oxidize this backbone to 2-oxooctanoic acid (PubMed:25058475). The aminotransferase apf4 is predicted to catalyze the exchange of the keto group with an amino group (PubMed:25058475). The next step would be the oxidation of 2-aminooctanoic acid by one of the cytochrome P450 monooxygenases (apf7 or apf8). The last step is the oxidation of 2-amino-8-hydroxyoctanoic acid to 2-aminooctanedioic acid is catalyzed by the FAD-dependent monooxygenase apf9 (PubMed:25058475).</text>
</comment>
<comment type="pathway">
    <text evidence="5">Secondary metabolite biosynthesis.</text>
</comment>
<comment type="induction">
    <text evidence="5">Expression is positively regulated by the apicidin F cluster-specific transcription factor apf2 that binds to the eight-base-pair motif 5'-TGACGTGA-3' called the 'Api-box' that is found in all promoters of the apicidin F cluster except in the promoter region of apf2 itself (PubMed:25058475).</text>
</comment>
<comment type="disruption phenotype">
    <text evidence="5">Leads to the loss of apicidin F production (PubMed:25058475).</text>
</comment>
<comment type="biotechnology">
    <text evidence="4">Apicidin F, like the other known apicidins, is a cyclic tetrapeptides with anti-malarial properties via histone deacetylase inhibitory activity (PubMed:24195442).</text>
</comment>
<comment type="similarity">
    <text evidence="7">Belongs to the NRP synthetase family.</text>
</comment>
<reference key="1">
    <citation type="journal article" date="2013" name="PLoS Pathog.">
        <title>Deciphering the cryptic genome: genome-wide analyses of the rice pathogen Fusarium fujikuroi reveal complex regulation of secondary metabolism and novel metabolites.</title>
        <authorList>
            <person name="Wiemann P."/>
            <person name="Sieber C.M.K."/>
            <person name="von Bargen K.W."/>
            <person name="Studt L."/>
            <person name="Niehaus E.-M."/>
            <person name="Espino J.J."/>
            <person name="Huss K."/>
            <person name="Michielse C.B."/>
            <person name="Albermann S."/>
            <person name="Wagner D."/>
            <person name="Bergner S.V."/>
            <person name="Connolly L.R."/>
            <person name="Fischer A."/>
            <person name="Reuter G."/>
            <person name="Kleigrewe K."/>
            <person name="Bald T."/>
            <person name="Wingfield B.D."/>
            <person name="Ophir R."/>
            <person name="Freeman S."/>
            <person name="Hippler M."/>
            <person name="Smith K.M."/>
            <person name="Brown D.W."/>
            <person name="Proctor R.H."/>
            <person name="Muensterkoetter M."/>
            <person name="Freitag M."/>
            <person name="Humpf H.-U."/>
            <person name="Gueldener U."/>
            <person name="Tudzynski B."/>
        </authorList>
    </citation>
    <scope>NUCLEOTIDE SEQUENCE [LARGE SCALE GENOMIC DNA]</scope>
    <source>
        <strain>CBS 195.34 / IMI 58289 / NRRL A-6831</strain>
    </source>
</reference>
<reference key="2">
    <citation type="journal article" date="2013" name="J. Nat. Prod.">
        <title>Structure elucidation and antimalarial activity of apicidin F: an apicidin-like compound produced by Fusarium fujikuroi.</title>
        <authorList>
            <person name="von Bargen K.W."/>
            <person name="Niehaus E.M."/>
            <person name="Bergander K."/>
            <person name="Brun R."/>
            <person name="Tudzynski B."/>
            <person name="Humpf H.U."/>
        </authorList>
    </citation>
    <scope>FUNCTION</scope>
    <scope>BIOTECHNOLOGY</scope>
</reference>
<reference key="3">
    <citation type="journal article" date="2014" name="PLoS ONE">
        <title>Apicidin F: characterization and genetic manipulation of a new secondary metabolite gene cluster in the rice pathogen Fusarium fujikuroi.</title>
        <authorList>
            <person name="Niehaus E.M."/>
            <person name="Janevska S."/>
            <person name="von Bargen K.W."/>
            <person name="Sieber C.M."/>
            <person name="Harrer H."/>
            <person name="Humpf H.U."/>
            <person name="Tudzynski B."/>
        </authorList>
    </citation>
    <scope>FUNCTION</scope>
    <scope>INDUCTION</scope>
    <scope>DISRUPTION PHENOTYPE</scope>
</reference>
<dbReference type="EC" id="6.3.2.-" evidence="8"/>
<dbReference type="EMBL" id="HF679023">
    <property type="protein sequence ID" value="CCT63360.1"/>
    <property type="molecule type" value="Genomic_DNA"/>
</dbReference>
<dbReference type="SMR" id="S0DLP2"/>
<dbReference type="STRING" id="1279085.S0DLP2"/>
<dbReference type="EnsemblFungi" id="CCT63360">
    <property type="protein sequence ID" value="CCT63360"/>
    <property type="gene ID" value="FFUJ_00003"/>
</dbReference>
<dbReference type="VEuPathDB" id="FungiDB:FFUJ_00003"/>
<dbReference type="HOGENOM" id="CLU_000022_60_0_1"/>
<dbReference type="BioCyc" id="MetaCyc:MONOMER-19327"/>
<dbReference type="Proteomes" id="UP000016800">
    <property type="component" value="Chromosome 1"/>
</dbReference>
<dbReference type="GO" id="GO:0005737">
    <property type="term" value="C:cytoplasm"/>
    <property type="evidence" value="ECO:0007669"/>
    <property type="project" value="TreeGrafter"/>
</dbReference>
<dbReference type="GO" id="GO:0016853">
    <property type="term" value="F:isomerase activity"/>
    <property type="evidence" value="ECO:0007669"/>
    <property type="project" value="UniProtKB-KW"/>
</dbReference>
<dbReference type="GO" id="GO:0016874">
    <property type="term" value="F:ligase activity"/>
    <property type="evidence" value="ECO:0007669"/>
    <property type="project" value="UniProtKB-KW"/>
</dbReference>
<dbReference type="GO" id="GO:0031177">
    <property type="term" value="F:phosphopantetheine binding"/>
    <property type="evidence" value="ECO:0007669"/>
    <property type="project" value="InterPro"/>
</dbReference>
<dbReference type="GO" id="GO:0043041">
    <property type="term" value="P:amino acid activation for nonribosomal peptide biosynthetic process"/>
    <property type="evidence" value="ECO:0007669"/>
    <property type="project" value="TreeGrafter"/>
</dbReference>
<dbReference type="GO" id="GO:0044550">
    <property type="term" value="P:secondary metabolite biosynthetic process"/>
    <property type="evidence" value="ECO:0007669"/>
    <property type="project" value="TreeGrafter"/>
</dbReference>
<dbReference type="CDD" id="cd05918">
    <property type="entry name" value="A_NRPS_SidN3_like"/>
    <property type="match status" value="4"/>
</dbReference>
<dbReference type="CDD" id="cd19542">
    <property type="entry name" value="CT_NRPS-like"/>
    <property type="match status" value="1"/>
</dbReference>
<dbReference type="CDD" id="cd19534">
    <property type="entry name" value="E_NRPS"/>
    <property type="match status" value="1"/>
</dbReference>
<dbReference type="CDD" id="cd19545">
    <property type="entry name" value="FUM14_C_NRPS-like"/>
    <property type="match status" value="2"/>
</dbReference>
<dbReference type="FunFam" id="3.30.559.30:FF:000002">
    <property type="entry name" value="Nonribosomal peptide synthase Pes1"/>
    <property type="match status" value="1"/>
</dbReference>
<dbReference type="FunFam" id="3.30.300.30:FF:000015">
    <property type="entry name" value="Nonribosomal peptide synthase SidD"/>
    <property type="match status" value="4"/>
</dbReference>
<dbReference type="FunFam" id="3.40.50.12780:FF:000014">
    <property type="entry name" value="Nonribosomal peptide synthetase 1"/>
    <property type="match status" value="2"/>
</dbReference>
<dbReference type="Gene3D" id="3.30.300.30">
    <property type="match status" value="4"/>
</dbReference>
<dbReference type="Gene3D" id="1.10.1200.10">
    <property type="entry name" value="ACP-like"/>
    <property type="match status" value="4"/>
</dbReference>
<dbReference type="Gene3D" id="3.30.559.10">
    <property type="entry name" value="Chloramphenicol acetyltransferase-like domain"/>
    <property type="match status" value="5"/>
</dbReference>
<dbReference type="Gene3D" id="3.40.50.12780">
    <property type="entry name" value="N-terminal domain of ligase-like"/>
    <property type="match status" value="4"/>
</dbReference>
<dbReference type="Gene3D" id="3.30.559.30">
    <property type="entry name" value="Nonribosomal peptide synthetase, condensation domain"/>
    <property type="match status" value="5"/>
</dbReference>
<dbReference type="InterPro" id="IPR010071">
    <property type="entry name" value="AA_adenyl_dom"/>
</dbReference>
<dbReference type="InterPro" id="IPR036736">
    <property type="entry name" value="ACP-like_sf"/>
</dbReference>
<dbReference type="InterPro" id="IPR045851">
    <property type="entry name" value="AMP-bd_C_sf"/>
</dbReference>
<dbReference type="InterPro" id="IPR020845">
    <property type="entry name" value="AMP-binding_CS"/>
</dbReference>
<dbReference type="InterPro" id="IPR000873">
    <property type="entry name" value="AMP-dep_synth/lig_dom"/>
</dbReference>
<dbReference type="InterPro" id="IPR042099">
    <property type="entry name" value="ANL_N_sf"/>
</dbReference>
<dbReference type="InterPro" id="IPR023213">
    <property type="entry name" value="CAT-like_dom_sf"/>
</dbReference>
<dbReference type="InterPro" id="IPR001242">
    <property type="entry name" value="Condensatn"/>
</dbReference>
<dbReference type="InterPro" id="IPR020806">
    <property type="entry name" value="PKS_PP-bd"/>
</dbReference>
<dbReference type="InterPro" id="IPR009081">
    <property type="entry name" value="PP-bd_ACP"/>
</dbReference>
<dbReference type="InterPro" id="IPR006162">
    <property type="entry name" value="Ppantetheine_attach_site"/>
</dbReference>
<dbReference type="NCBIfam" id="TIGR01733">
    <property type="entry name" value="AA-adenyl-dom"/>
    <property type="match status" value="4"/>
</dbReference>
<dbReference type="NCBIfam" id="NF003417">
    <property type="entry name" value="PRK04813.1"/>
    <property type="match status" value="5"/>
</dbReference>
<dbReference type="PANTHER" id="PTHR45527">
    <property type="entry name" value="NONRIBOSOMAL PEPTIDE SYNTHETASE"/>
    <property type="match status" value="1"/>
</dbReference>
<dbReference type="PANTHER" id="PTHR45527:SF15">
    <property type="entry name" value="NONRIBOSOMAL PEPTIDE SYNTHETASE EASA-RELATED"/>
    <property type="match status" value="1"/>
</dbReference>
<dbReference type="Pfam" id="PF00501">
    <property type="entry name" value="AMP-binding"/>
    <property type="match status" value="4"/>
</dbReference>
<dbReference type="Pfam" id="PF00668">
    <property type="entry name" value="Condensation"/>
    <property type="match status" value="5"/>
</dbReference>
<dbReference type="Pfam" id="PF00550">
    <property type="entry name" value="PP-binding"/>
    <property type="match status" value="4"/>
</dbReference>
<dbReference type="SMART" id="SM00823">
    <property type="entry name" value="PKS_PP"/>
    <property type="match status" value="2"/>
</dbReference>
<dbReference type="SUPFAM" id="SSF56801">
    <property type="entry name" value="Acetyl-CoA synthetase-like"/>
    <property type="match status" value="4"/>
</dbReference>
<dbReference type="SUPFAM" id="SSF47336">
    <property type="entry name" value="ACP-like"/>
    <property type="match status" value="4"/>
</dbReference>
<dbReference type="SUPFAM" id="SSF52777">
    <property type="entry name" value="CoA-dependent acyltransferases"/>
    <property type="match status" value="10"/>
</dbReference>
<dbReference type="PROSITE" id="PS00455">
    <property type="entry name" value="AMP_BINDING"/>
    <property type="match status" value="3"/>
</dbReference>
<dbReference type="PROSITE" id="PS50075">
    <property type="entry name" value="CARRIER"/>
    <property type="match status" value="4"/>
</dbReference>
<dbReference type="PROSITE" id="PS00012">
    <property type="entry name" value="PHOSPHOPANTETHEINE"/>
    <property type="match status" value="1"/>
</dbReference>
<name>APF1_GIBF5</name>
<organism>
    <name type="scientific">Gibberella fujikuroi (strain CBS 195.34 / IMI 58289 / NRRL A-6831)</name>
    <name type="common">Bakanae and foot rot disease fungus</name>
    <name type="synonym">Fusarium fujikuroi</name>
    <dbReference type="NCBI Taxonomy" id="1279085"/>
    <lineage>
        <taxon>Eukaryota</taxon>
        <taxon>Fungi</taxon>
        <taxon>Dikarya</taxon>
        <taxon>Ascomycota</taxon>
        <taxon>Pezizomycotina</taxon>
        <taxon>Sordariomycetes</taxon>
        <taxon>Hypocreomycetidae</taxon>
        <taxon>Hypocreales</taxon>
        <taxon>Nectriaceae</taxon>
        <taxon>Fusarium</taxon>
        <taxon>Fusarium fujikuroi species complex</taxon>
    </lineage>
</organism>
<protein>
    <recommendedName>
        <fullName evidence="7">Apicidin F synthase</fullName>
        <ecNumber evidence="8">6.3.2.-</ecNumber>
    </recommendedName>
    <alternativeName>
        <fullName evidence="6">Apicidin F synthesis protein 1</fullName>
    </alternativeName>
    <alternativeName>
        <fullName evidence="6">Non-ribosomal peptide synthetase apf1</fullName>
        <shortName evidence="6">NRPS apf1</shortName>
    </alternativeName>
</protein>
<sequence>MAIKMIDKQVLACNLDAFAGRVTNSTDINEQAIEWLSPTPSAVTLEAAWCVTLRLYTGLDHLSFGSLTQDGIVATKLCNLGPHDTLEDVCSHVQLYDYSDDTVCHYNTAVIFKLDENEGKKLSELIPRGIDVALMVTGSNLGVLARASFMDADEARNLCQNFRHVLNCFQEPNQAVRGITLSDNDVNQILSWNKSQLTRTESLIHDQFARILQRQPDKSAIESWDGNMTYRELDAASSSLAESLSRANIGPGSWVLFCFNKSRWAIVSMLAILKAGGACVPLDPRHPKSRVVQILQATGAQHILVGDADNDIKNRLCNEFPSVKVIGVPHHEVCESQDIDTISLSFDSPAIGLFTSGSTGTPKGIVATHATICTGASSYAHHIGADDKTRVLQFASYTFDVCMVDVFTALLHGGTLCIPSEEERMTGLQEYISRTQPNWAALTPTVARVLDPALSSKSIRKILLVGEMVRESDIAEWLDSGVQVYNVYGPAENNLITTAAKAIRGRASNVGTGINTHTWVADVENERLVPIGAVGELICSGPHLTPGYLNDPERTASSFFEDLSWIPNMMDNKPFSRRFYRSGDLVRYCADGSLQCVGRLDSQVKLGGQRVELSEIESYIKSHNAAVLVPKAGSMKNKLIAVLEGAGSSGQSLGISSCDPGVAQQVEQVLRKNLPSYMCPSIWISVPHLPLSSSGKLDRKVLMNKLETLSHEEYLGLILDHAQDEDDQDGHETDNCQRLLREACSQVLNIPVERIAMSRAFAGHGGDSITAMQVSSLIKRTQTLVVTVKDLLTCHSLAEAASSMREVVTSIQVPTAHPGKLYPLSPIQRLFMATAPTSVTWNHYNQSVLLRIRERRSSDHVKESLGGVVRRHAMLRGRFQRVSSSEWMQRILPDDQGNLFFEYFPDASDYKQREALMLKARESLDIESGPLLRAQLFDGQVEQGMLLFIVSHHLVVDLVSWRVILEELEVSLAQPYGNTTDANDISALLLPQESVPFPVWSELQHEAAKNMDPDRVIPQQYAVPAPDFSYWGISSARNVYRDVIEKSISLGDMTTKNVLYECHEALQTEPVDIFLSAILLSFKRAFPERPIPPIFNEGHGREPWTSDLDISRTVGWFTTMFPIYVPNISAGDVVDTVRRVKDFRKGCAENGFQYFSTKYLHEQGRKTFKDHIPAEIMFNYEGRYQSLEKEKSLLMAEAWEAGEALSDSAPELQRFCLFELSAAVLTDGEIHFTMAWNSRARYQERISLWLTRLLPAVIDEIVTYLMLEKRQYTLSDLSQARLSDYSDLETLMASVSTIPGIDSIEGVEEIYCGSPMQDSLALSQSRISGGVYEIDLTWEVTDGRQGNYQVDVNRLVLAWNDVVARHAALRTVFLEAASSSNDVMLHQVVLRKYRPSTILMHTRDSSQALKQLSSCASYKKRGILIDKRPPHALAICSTDEGRTFVRFQVNHILFDGTSIAPLLRDLSRAYRNSHEVRREWTWNPFANFIRYIRDEKRRSDDLAYWKSYLATARPCQFPTLKHEESIEAPGTEQQRGAVQVCMSDKPSSLRNFLADMGVTVPTLVQLVWALVLRMYTSDSQVAFGYLASGRDAPVVDIEQAVGPFISILVHFLDFDNEGQLPIADMLQRIQDRSARSISHQSRSLAEIQDAIGLTGSSLLFNTGISFMPKWTKDMQLRNGSGLIFDQIAANDPTEFDISLIVETGDDGVDGMCIYVDYRTSTVGRMHAINIAASFDHILSQIIQDPSVPLNDVSGISTRDFDQISNWNRLLSPPKDKCLHDLFIEKVIEDPTREAVFSWDGSMSYGELHDLSARLANYLVHLGVGPEQMIPICFEKSVWTVVTILAVLKAGGCFVLLDPTHPASRLWNIVGEIEASILLCSPLTNRSKKLDASPDMNARKAAIIEIHPSFVNNLKSVSRESQHTPLCPSLSPDNAAYVVFTSGSTGIPKGVVVTHRAVVTGLDELGRAAGMTAMGSGTRTLQFASYSFDASIADIFCALQLGGCVCVMSDEGRSPADITDFIQRSRATYAGITPSFASLLDPRLVPSLRVLCFSGEALPASQIEAWSGYVKMVNMYGPTEASIACIANSEVTRTTDASNIGRAFRGSTWIVDENDHNQLRAIGSSGELLIEGPILAREYLKRPEQTAQAFISNPPWLQNIRPNSRLYKTGDMVRYNTNGTISYIGRKDNQIKINGQRVEVSEIEETLRASIEPEAGLITVELLDRKALGEADVLTAFVYIAGHDPSSTRDDKADNKKPFTIPDNPLLLEYFRSMLPRLESSSSKMPRYMVPQAYIPIDSLPLTTSGKVDRRALRHAAAQLNRNQLFSFASSLDMVHEPSVDVVKDDPVSELAHLWESVLNVRVSGTQSNFFRLGGNSMAAMNLRSQARKAGFQLSVADILANPTLSDMAKGMAPLSLTAPESTSSSSPQSFSTSTSTTIIENDPDTSPFSLLRTRGIALNEGLWQQMFDNADILWSEVEDIFPCTPMQEGLMVLSAHREGHGAYALHAPYKLPSDLDLAKLQFAWEQTTMVHAILRSRIVTHSQGALIVLQKSPVVVQQSTCSTLDDHLEEQRRLIFGYGVPLFRMTMVFDQIAQCHYFVMSIHHALFDGWSFSRMWDTALAIYQGRQLSRDIPSFQSFVQHLGAAPLSASKEYWKSHLVEQDRDGFQFPAVPSTHKPIATASASFEFAFQSTIAMSAGVTPSTMVHAAWAILLSQYTASSTVNFGVTLSGRDFPMPGLDQVVGATIVTLPRQLNINLNQNVIEFLEYVQQEAANVIPHQYLGIHEIRALGLEAQQACNFSTLILVNHNTVDLDSPLSVFGITQVPVDSVDFHPYPLAVEFTVQPESLVVNVCYDPVCIGGSMVESVMQQYDHVLQSLSEGLMCSSGLSGTNLASIMTGIAPAHLQKMLDWNKDGHRYGASRQTHLVLDHIGLNTRNNPRARAVVADDSTLSYAELNRLARVVSHRITQLDISGEFIAVCFDKSAAAIVSMLAVLQTGFAFMPISASQPPARLENLLTAANVQVVLTSPAHTDLLSGLSSHRRIVPVDLKDIDQHEQMQLNRSGSAVDKSRAAYLLYTSGTTGQPKGVVVQHGAWSKAIASQIDFFGFTRDTKMLQFSNYTFDASIFEIFITLCSGGCLFVPSEHSRVNDLEGFIRTNELNTITLTPTVARVIRPGQLPCVRQCLFGGESLTQSDIFAWAQQGRRVTNCYGPTEACVFSCGRDIRLDATDTKVTNIGRPVGINAWIISSMSGSISPIGAPGELCLEGQMLARGYLNDPERTQLSFSNHLPNNIPGKKNSRTYRTGDMVCHEADGTLNFLGRRDGQIKLRGHRIDVGEIEHHIQHAMADDSTYHSSTVQVYWKDTRNKSDAELAALLRMDIQHKECVMGVPCSLLSMPGRADESPTASQLKFKLRRILPEHMTPNTFIAVQHFPTTASGKLDRSFAQRCVEYFVPYTQKEVNKNETWSSSEAIVREWWCSILGVNTDLICRHDNFFGLGGNSIYAIRLVGLARSNGHHLQYEDVFSSPVLADMASRLSRPEDSRVQSETRQPPEPFQLISESDLKSVMDDILPLYNINKDEVEDIYPCTPLQATLMAETARHRGVYILAESIQVPSSQMTLFQDAWLLMFKSYEILRTRIVLSHDQSHGEWQVVMKYQPLTWTEFPDAKSFIEFVYNTHDYGKPLVHLAILGGNGGRIKDTDHSVKVGLCVHHAAYDGWSLSNIWRTITKKLTSSSSYSVGPYTPFNTYIRHLTEQDPEKAKSYWKERFSGLSSASLIPRPQDPGHQSSATDTIQRNLDLPTLSDHLLGKTAIVAQAAWAITISHYTANSDTLCGTILSGREYAAASVPGVETIVGPTIATVPSRTTINYDSCVLDLITAVQKDNLNAVRFSHMGLEQISRLNLDCRQACKFDNLFWVQPDLDETPANSIIRDIINVRGFSSSPMVLEIQLPAEGQKVVVNMSFDRVAVSNQQAELIVDTYITIMDNLLHAPLDTRLRSIAALSPAHISQISRVSSSPVEAVQACVHDLVRKQVELSPSHTAIDAWDGSMAYAALDALSTSLAEKLSGLGIGPESPVCILFEKSKWAIVAMLGVVKTGGCFVPLNPQSPIKRLQHLVESVDASIILVSPQYEELSISLSLHHVKILVISQDTIPSPISALKPSRAFPSSVGPQNAAYILFTSGSTGLPKGVVIEHQALCSSLTVLSSRVGLNSNSRVFQFNAYWFDVMLLDVFGTLISGGTICAPSESDCMDDLAGSINKFNANTIAALSTSVSRLIEPSSIPCLNTLGLGGEPVLSSDRDRWAPHVRLFSMYGPTETCIVSLMTDMTSTTPASLLGHPVGCRVWIVNPLKNDELAPLGGIGELFIEGPGLARYYLVDEDKTAAAFLSNQSWTIQDPSFQGSRRFYKTGDLVRINTDGTVSWIGRKDHSQVKIRGQRVELAEIEETIRQHIPSALTVAVDILIDGERRILAAVFGTNLMLPGLSDTEVEVYMEKLIKGLLPKLNGSLPKHMVPTAFIPLPFLPFLSTGKLDRKALHRLALPLAVELTKRTSTNRQALKTPKERLLSALWSEVLSTSKGEPAGPADNFFNAGGDSMMAMKLVAMARHRGLTLSVVDIFKNPILSDMADLLGPLRHEEEPSKEDSTHMLPIDTSSKLKDSLYEVLTVPPDRIEQIYPCTAYQEMFLSGTEVWPGAHVTQFIFSIDKGTDMHRLEKAMGRCTAEFPTLRTRIVRHGESGQLLQVVLHKGHEAPWSIHLTDDLDSALDQEKKDHWMHSGLSEPLHRLSLVMNNSGCTHLIWSLNHAAYDAWSFGMMLRSLGQDRANSTRHSRTCLPFNGLIRHISKLRDASSESRRFWRSYIADIGSQVLLFRYPSIADPRQDRLAVHQVSFPKHGGRSSTSLITAAWIMLLARLSHRKDITIAYLVTGRTLPLGGIDTCPGPLISKLPLRIQLLDEPRGLVDVADLVRIETVRVMPHEHTGLDAIKDLASQDDDDIHPHAASLLGRFPLDLAIHPAGHTDVDAARSIGITHIGQKVVVPPPGTFSAECSIISEDNYIAVSLAVIWDNRAMDEDDVNRVVEIWKDIIVRG</sequence>
<evidence type="ECO:0000255" key="1"/>
<evidence type="ECO:0000255" key="2">
    <source>
        <dbReference type="PROSITE-ProRule" id="PRU00258"/>
    </source>
</evidence>
<evidence type="ECO:0000256" key="3">
    <source>
        <dbReference type="SAM" id="MobiDB-lite"/>
    </source>
</evidence>
<evidence type="ECO:0000269" key="4">
    <source>
    </source>
</evidence>
<evidence type="ECO:0000269" key="5">
    <source>
    </source>
</evidence>
<evidence type="ECO:0000303" key="6">
    <source>
    </source>
</evidence>
<evidence type="ECO:0000305" key="7"/>
<evidence type="ECO:0000305" key="8">
    <source>
    </source>
</evidence>
<accession>S0DLP2</accession>
<feature type="chain" id="PRO_0000437156" description="Apicidin F synthase">
    <location>
        <begin position="1"/>
        <end position="5084"/>
    </location>
</feature>
<feature type="domain" description="Carrier 1" evidence="2">
    <location>
        <begin position="731"/>
        <end position="808"/>
    </location>
</feature>
<feature type="domain" description="Carrier 2" evidence="2">
    <location>
        <begin position="2341"/>
        <end position="2415"/>
    </location>
</feature>
<feature type="domain" description="Carrier 3" evidence="2">
    <location>
        <begin position="3463"/>
        <end position="3539"/>
    </location>
</feature>
<feature type="domain" description="Carrier 4" evidence="2">
    <location>
        <begin position="4554"/>
        <end position="4631"/>
    </location>
</feature>
<feature type="region of interest" description="Adenylation 1" evidence="1">
    <location>
        <begin position="209"/>
        <end position="606"/>
    </location>
</feature>
<feature type="region of interest" description="Condensation 1" evidence="1">
    <location>
        <begin position="822"/>
        <end position="1124"/>
    </location>
</feature>
<feature type="region of interest" description="Condensation 2" evidence="1">
    <location>
        <begin position="1309"/>
        <end position="1609"/>
    </location>
</feature>
<feature type="region of interest" description="Adenylation 2" evidence="1">
    <location>
        <begin position="1788"/>
        <end position="2192"/>
    </location>
</feature>
<feature type="region of interest" description="Disordered" evidence="3">
    <location>
        <begin position="2415"/>
        <end position="2441"/>
    </location>
</feature>
<feature type="region of interest" description="Condensation 3" evidence="1">
    <location>
        <begin position="2478"/>
        <end position="2755"/>
    </location>
</feature>
<feature type="region of interest" description="Adenylation 3" evidence="1">
    <location>
        <begin position="2935"/>
        <end position="3328"/>
    </location>
</feature>
<feature type="region of interest" description="Condensation 4" evidence="1">
    <location>
        <begin position="3581"/>
        <end position="3866"/>
    </location>
</feature>
<feature type="region of interest" description="Adenylation 4" evidence="1">
    <location>
        <begin position="4029"/>
        <end position="4426"/>
    </location>
</feature>
<feature type="region of interest" description="Condensation 5" evidence="1">
    <location>
        <begin position="4669"/>
        <end position="4948"/>
    </location>
</feature>
<feature type="compositionally biased region" description="Low complexity" evidence="3">
    <location>
        <begin position="2421"/>
        <end position="2437"/>
    </location>
</feature>
<feature type="modified residue" description="O-(pantetheine 4'-phosphoryl)serine" evidence="2">
    <location>
        <position position="768"/>
    </location>
</feature>
<feature type="modified residue" description="O-(pantetheine 4'-phosphoryl)serine" evidence="2">
    <location>
        <position position="2376"/>
    </location>
</feature>
<feature type="modified residue" description="O-(pantetheine 4'-phosphoryl)serine" evidence="2">
    <location>
        <position position="3500"/>
    </location>
</feature>
<feature type="modified residue" description="O-(pantetheine 4'-phosphoryl)serine" evidence="2">
    <location>
        <position position="4592"/>
    </location>
</feature>
<keyword id="KW-0413">Isomerase</keyword>
<keyword id="KW-0436">Ligase</keyword>
<keyword id="KW-0596">Phosphopantetheine</keyword>
<keyword id="KW-0597">Phosphoprotein</keyword>
<keyword id="KW-1185">Reference proteome</keyword>
<keyword id="KW-0677">Repeat</keyword>